<evidence type="ECO:0000250" key="1"/>
<evidence type="ECO:0000255" key="2"/>
<evidence type="ECO:0000269" key="3">
    <source>
    </source>
</evidence>
<evidence type="ECO:0000269" key="4">
    <source>
    </source>
</evidence>
<evidence type="ECO:0000305" key="5"/>
<organism>
    <name type="scientific">Arabidopsis thaliana</name>
    <name type="common">Mouse-ear cress</name>
    <dbReference type="NCBI Taxonomy" id="3702"/>
    <lineage>
        <taxon>Eukaryota</taxon>
        <taxon>Viridiplantae</taxon>
        <taxon>Streptophyta</taxon>
        <taxon>Embryophyta</taxon>
        <taxon>Tracheophyta</taxon>
        <taxon>Spermatophyta</taxon>
        <taxon>Magnoliopsida</taxon>
        <taxon>eudicotyledons</taxon>
        <taxon>Gunneridae</taxon>
        <taxon>Pentapetalae</taxon>
        <taxon>rosids</taxon>
        <taxon>malvids</taxon>
        <taxon>Brassicales</taxon>
        <taxon>Brassicaceae</taxon>
        <taxon>Camelineae</taxon>
        <taxon>Arabidopsis</taxon>
    </lineage>
</organism>
<protein>
    <recommendedName>
        <fullName>Alpha-L-fucosidase 3</fullName>
        <ecNumber evidence="3">3.2.1.51</ecNumber>
    </recommendedName>
    <alternativeName>
        <fullName>Alpha-1,2-fucosidase</fullName>
        <shortName>AtFXG1</shortName>
    </alternativeName>
    <alternativeName>
        <fullName>Alpha-L-fucoside fucohydrolase 3</fullName>
    </alternativeName>
</protein>
<reference key="1">
    <citation type="journal article" date="2000" name="Nature">
        <title>Sequence and analysis of chromosome 1 of the plant Arabidopsis thaliana.</title>
        <authorList>
            <person name="Theologis A."/>
            <person name="Ecker J.R."/>
            <person name="Palm C.J."/>
            <person name="Federspiel N.A."/>
            <person name="Kaul S."/>
            <person name="White O."/>
            <person name="Alonso J."/>
            <person name="Altafi H."/>
            <person name="Araujo R."/>
            <person name="Bowman C.L."/>
            <person name="Brooks S.Y."/>
            <person name="Buehler E."/>
            <person name="Chan A."/>
            <person name="Chao Q."/>
            <person name="Chen H."/>
            <person name="Cheuk R.F."/>
            <person name="Chin C.W."/>
            <person name="Chung M.K."/>
            <person name="Conn L."/>
            <person name="Conway A.B."/>
            <person name="Conway A.R."/>
            <person name="Creasy T.H."/>
            <person name="Dewar K."/>
            <person name="Dunn P."/>
            <person name="Etgu P."/>
            <person name="Feldblyum T.V."/>
            <person name="Feng J.-D."/>
            <person name="Fong B."/>
            <person name="Fujii C.Y."/>
            <person name="Gill J.E."/>
            <person name="Goldsmith A.D."/>
            <person name="Haas B."/>
            <person name="Hansen N.F."/>
            <person name="Hughes B."/>
            <person name="Huizar L."/>
            <person name="Hunter J.L."/>
            <person name="Jenkins J."/>
            <person name="Johnson-Hopson C."/>
            <person name="Khan S."/>
            <person name="Khaykin E."/>
            <person name="Kim C.J."/>
            <person name="Koo H.L."/>
            <person name="Kremenetskaia I."/>
            <person name="Kurtz D.B."/>
            <person name="Kwan A."/>
            <person name="Lam B."/>
            <person name="Langin-Hooper S."/>
            <person name="Lee A."/>
            <person name="Lee J.M."/>
            <person name="Lenz C.A."/>
            <person name="Li J.H."/>
            <person name="Li Y.-P."/>
            <person name="Lin X."/>
            <person name="Liu S.X."/>
            <person name="Liu Z.A."/>
            <person name="Luros J.S."/>
            <person name="Maiti R."/>
            <person name="Marziali A."/>
            <person name="Militscher J."/>
            <person name="Miranda M."/>
            <person name="Nguyen M."/>
            <person name="Nierman W.C."/>
            <person name="Osborne B.I."/>
            <person name="Pai G."/>
            <person name="Peterson J."/>
            <person name="Pham P.K."/>
            <person name="Rizzo M."/>
            <person name="Rooney T."/>
            <person name="Rowley D."/>
            <person name="Sakano H."/>
            <person name="Salzberg S.L."/>
            <person name="Schwartz J.R."/>
            <person name="Shinn P."/>
            <person name="Southwick A.M."/>
            <person name="Sun H."/>
            <person name="Tallon L.J."/>
            <person name="Tambunga G."/>
            <person name="Toriumi M.J."/>
            <person name="Town C.D."/>
            <person name="Utterback T."/>
            <person name="Van Aken S."/>
            <person name="Vaysberg M."/>
            <person name="Vysotskaia V.S."/>
            <person name="Walker M."/>
            <person name="Wu D."/>
            <person name="Yu G."/>
            <person name="Fraser C.M."/>
            <person name="Venter J.C."/>
            <person name="Davis R.W."/>
        </authorList>
    </citation>
    <scope>NUCLEOTIDE SEQUENCE [LARGE SCALE GENOMIC DNA]</scope>
    <source>
        <strain>cv. Columbia</strain>
    </source>
</reference>
<reference key="2">
    <citation type="journal article" date="2017" name="Plant J.">
        <title>Araport11: a complete reannotation of the Arabidopsis thaliana reference genome.</title>
        <authorList>
            <person name="Cheng C.Y."/>
            <person name="Krishnakumar V."/>
            <person name="Chan A.P."/>
            <person name="Thibaud-Nissen F."/>
            <person name="Schobel S."/>
            <person name="Town C.D."/>
        </authorList>
    </citation>
    <scope>GENOME REANNOTATION</scope>
    <source>
        <strain>cv. Columbia</strain>
    </source>
</reference>
<reference key="3">
    <citation type="submission" date="2004-09" db="EMBL/GenBank/DDBJ databases">
        <title>Large-scale analysis of RIKEN Arabidopsis full-length (RAFL) cDNAs.</title>
        <authorList>
            <person name="Totoki Y."/>
            <person name="Seki M."/>
            <person name="Ishida J."/>
            <person name="Nakajima M."/>
            <person name="Enju A."/>
            <person name="Kamiya A."/>
            <person name="Narusaka M."/>
            <person name="Shin-i T."/>
            <person name="Nakagawa M."/>
            <person name="Sakamoto N."/>
            <person name="Oishi K."/>
            <person name="Kohara Y."/>
            <person name="Kobayashi M."/>
            <person name="Toyoda A."/>
            <person name="Sakaki Y."/>
            <person name="Sakurai T."/>
            <person name="Iida K."/>
            <person name="Akiyama K."/>
            <person name="Satou M."/>
            <person name="Toyoda T."/>
            <person name="Konagaya A."/>
            <person name="Carninci P."/>
            <person name="Kawai J."/>
            <person name="Hayashizaki Y."/>
            <person name="Shinozaki K."/>
        </authorList>
    </citation>
    <scope>NUCLEOTIDE SEQUENCE [LARGE SCALE MRNA] OF 9-372</scope>
    <source>
        <strain>cv. Columbia</strain>
    </source>
</reference>
<reference key="4">
    <citation type="journal article" date="2002" name="Plant Physiol.">
        <title>AtFXG1, an Arabidopsis gene encoding alpha-L-fucosidase active against fucosylated xyloglucan oligosaccharides.</title>
        <authorList>
            <person name="de La Torre F."/>
            <person name="Sampedro J."/>
            <person name="Zarra I."/>
            <person name="Revilla G."/>
        </authorList>
    </citation>
    <scope>FUNCTION</scope>
    <scope>SUBCELLULAR LOCATION</scope>
    <scope>CATALYTIC ACTIVITY</scope>
</reference>
<reference key="5">
    <citation type="journal article" date="2006" name="Plant Cell Physiol.">
        <title>Apoplastic glycosidases active against xyloglucan oligosaccharides of Arabidopsis thaliana.</title>
        <authorList>
            <person name="Iglesias N."/>
            <person name="Abelenda J.A."/>
            <person name="Rodino M."/>
            <person name="Sampedro J."/>
            <person name="Revilla G."/>
            <person name="Zarra I."/>
        </authorList>
    </citation>
    <scope>SUBCELLULAR LOCATION</scope>
    <scope>TISSUE SPECIFICITY</scope>
</reference>
<comment type="function">
    <text evidence="3">Hydrolyzes alpha-1,2-linked fucose. Also active on fucosylated xyloglucan oligosaccharides.</text>
</comment>
<comment type="catalytic activity">
    <reaction evidence="3">
        <text>an alpha-L-fucoside + H2O = L-fucose + an alcohol</text>
        <dbReference type="Rhea" id="RHEA:12288"/>
        <dbReference type="ChEBI" id="CHEBI:2181"/>
        <dbReference type="ChEBI" id="CHEBI:15377"/>
        <dbReference type="ChEBI" id="CHEBI:28349"/>
        <dbReference type="ChEBI" id="CHEBI:30879"/>
        <dbReference type="EC" id="3.2.1.51"/>
    </reaction>
</comment>
<comment type="subcellular location">
    <subcellularLocation>
        <location evidence="3 4">Secreted</location>
        <location evidence="3 4">Extracellular space</location>
        <location evidence="3 4">Apoplast</location>
    </subcellularLocation>
</comment>
<comment type="tissue specificity">
    <text evidence="4">High expression in younger leaves and in the apical region of the inflorescence stem.</text>
</comment>
<comment type="similarity">
    <text evidence="5">Belongs to the 'GDSL' lipolytic enzyme family.</text>
</comment>
<comment type="caution">
    <text evidence="5">The functional assignment is controversial.</text>
</comment>
<feature type="signal peptide" evidence="2">
    <location>
        <begin position="1"/>
        <end position="23"/>
    </location>
</feature>
<feature type="chain" id="PRO_0000225694" description="Alpha-L-fucosidase 3">
    <location>
        <begin position="24"/>
        <end position="372"/>
    </location>
</feature>
<feature type="active site" description="Nucleophile" evidence="1">
    <location>
        <position position="37"/>
    </location>
</feature>
<feature type="active site" evidence="1">
    <location>
        <position position="345"/>
    </location>
</feature>
<feature type="active site" evidence="1">
    <location>
        <position position="348"/>
    </location>
</feature>
<feature type="glycosylation site" description="N-linked (GlcNAc...) asparagine" evidence="2">
    <location>
        <position position="96"/>
    </location>
</feature>
<feature type="glycosylation site" description="N-linked (GlcNAc...) asparagine" evidence="2">
    <location>
        <position position="114"/>
    </location>
</feature>
<feature type="glycosylation site" description="N-linked (GlcNAc...) asparagine" evidence="2">
    <location>
        <position position="139"/>
    </location>
</feature>
<feature type="glycosylation site" description="N-linked (GlcNAc...) asparagine" evidence="2">
    <location>
        <position position="182"/>
    </location>
</feature>
<feature type="sequence conflict" description="In Ref. 3; BAD43265." evidence="5" ref="3">
    <original>L</original>
    <variation>R</variation>
    <location>
        <position position="11"/>
    </location>
</feature>
<keyword id="KW-0052">Apoplast</keyword>
<keyword id="KW-0325">Glycoprotein</keyword>
<keyword id="KW-0326">Glycosidase</keyword>
<keyword id="KW-0378">Hydrolase</keyword>
<keyword id="KW-1185">Reference proteome</keyword>
<keyword id="KW-0964">Secreted</keyword>
<keyword id="KW-0732">Signal</keyword>
<accession>Q9FXE5</accession>
<accession>Q681W5</accession>
<sequence length="372" mass="40462">MNPILSSLFALSLLSSLSPSTHAHQCHFPAIFNFGDSNSDTGGLSAAFGQAGPPHGSSFFGSPAGRYCDGRLVIDFIAESLGLPYLSAFLDSVGSNFSHGANFATAGSPIRALNSTLRQSGFSPFSLDVQFVQFYNFHNRSQTVRSRGGVYKTMLPESDSFSKALYTFDIGQNDLTAGYFANKTVEQVETEVPEIISQFMNAIKNIYGQGGRYFWIHNTGPIGCLAYVIERFPNKASDFDSHGCVSPLNHLAQQFNHALKQAVIELRSSLSEAAITYVDVYSLKHELFVHAQGHGFKGSLVSCCGHGGKYNYNKGIGCGMKKIVKGKEVYIGKPCDEPDKAVVWDGVHFTQAANKFIFDKIAPGLSKACKRQ</sequence>
<gene>
    <name type="primary">FXG1</name>
    <name type="ordered locus">At1g67830</name>
    <name type="ORF">F12A21.4</name>
</gene>
<dbReference type="EC" id="3.2.1.51" evidence="3"/>
<dbReference type="EMBL" id="AC008113">
    <property type="protein sequence ID" value="AAG28886.1"/>
    <property type="molecule type" value="Genomic_DNA"/>
</dbReference>
<dbReference type="EMBL" id="CP002684">
    <property type="protein sequence ID" value="AEE34703.1"/>
    <property type="molecule type" value="Genomic_DNA"/>
</dbReference>
<dbReference type="EMBL" id="AK175502">
    <property type="protein sequence ID" value="BAD43265.1"/>
    <property type="molecule type" value="mRNA"/>
</dbReference>
<dbReference type="RefSeq" id="NP_176949.1">
    <property type="nucleotide sequence ID" value="NM_105451.4"/>
</dbReference>
<dbReference type="SMR" id="Q9FXE5"/>
<dbReference type="FunCoup" id="Q9FXE5">
    <property type="interactions" value="104"/>
</dbReference>
<dbReference type="STRING" id="3702.Q9FXE5"/>
<dbReference type="GlyCosmos" id="Q9FXE5">
    <property type="glycosylation" value="4 sites, No reported glycans"/>
</dbReference>
<dbReference type="GlyGen" id="Q9FXE5">
    <property type="glycosylation" value="4 sites"/>
</dbReference>
<dbReference type="iPTMnet" id="Q9FXE5"/>
<dbReference type="PaxDb" id="3702-AT1G67830.1"/>
<dbReference type="ProteomicsDB" id="230047"/>
<dbReference type="EnsemblPlants" id="AT1G67830.1">
    <property type="protein sequence ID" value="AT1G67830.1"/>
    <property type="gene ID" value="AT1G67830"/>
</dbReference>
<dbReference type="GeneID" id="843109"/>
<dbReference type="Gramene" id="AT1G67830.1">
    <property type="protein sequence ID" value="AT1G67830.1"/>
    <property type="gene ID" value="AT1G67830"/>
</dbReference>
<dbReference type="KEGG" id="ath:AT1G67830"/>
<dbReference type="Araport" id="AT1G67830"/>
<dbReference type="TAIR" id="AT1G67830">
    <property type="gene designation" value="FXG1"/>
</dbReference>
<dbReference type="eggNOG" id="ENOG502QQGV">
    <property type="taxonomic scope" value="Eukaryota"/>
</dbReference>
<dbReference type="HOGENOM" id="CLU_015101_2_0_1"/>
<dbReference type="InParanoid" id="Q9FXE5"/>
<dbReference type="OMA" id="IGKPCDE"/>
<dbReference type="PhylomeDB" id="Q9FXE5"/>
<dbReference type="BioCyc" id="ARA:AT1G67830-MONOMER"/>
<dbReference type="BioCyc" id="MetaCyc:AT1G67830-MONOMER"/>
<dbReference type="PRO" id="PR:Q9FXE5"/>
<dbReference type="Proteomes" id="UP000006548">
    <property type="component" value="Chromosome 1"/>
</dbReference>
<dbReference type="ExpressionAtlas" id="Q9FXE5">
    <property type="expression patterns" value="baseline and differential"/>
</dbReference>
<dbReference type="GO" id="GO:0048046">
    <property type="term" value="C:apoplast"/>
    <property type="evidence" value="ECO:0007669"/>
    <property type="project" value="UniProtKB-SubCell"/>
</dbReference>
<dbReference type="GO" id="GO:0004560">
    <property type="term" value="F:alpha-L-fucosidase activity"/>
    <property type="evidence" value="ECO:0000314"/>
    <property type="project" value="TAIR"/>
</dbReference>
<dbReference type="GO" id="GO:0016788">
    <property type="term" value="F:hydrolase activity, acting on ester bonds"/>
    <property type="evidence" value="ECO:0007669"/>
    <property type="project" value="InterPro"/>
</dbReference>
<dbReference type="CDD" id="cd01837">
    <property type="entry name" value="SGNH_plant_lipase_like"/>
    <property type="match status" value="1"/>
</dbReference>
<dbReference type="FunFam" id="3.40.50.1110:FF:000009">
    <property type="entry name" value="GDSL esterase/lipase At1g09390"/>
    <property type="match status" value="1"/>
</dbReference>
<dbReference type="Gene3D" id="3.40.50.1110">
    <property type="entry name" value="SGNH hydrolase"/>
    <property type="match status" value="1"/>
</dbReference>
<dbReference type="InterPro" id="IPR001087">
    <property type="entry name" value="GDSL"/>
</dbReference>
<dbReference type="InterPro" id="IPR036514">
    <property type="entry name" value="SGNH_hydro_sf"/>
</dbReference>
<dbReference type="InterPro" id="IPR035669">
    <property type="entry name" value="SGNH_plant_lipase-like"/>
</dbReference>
<dbReference type="PANTHER" id="PTHR22835:SF588">
    <property type="entry name" value="ALPHA-L-FUCOSIDASE 3"/>
    <property type="match status" value="1"/>
</dbReference>
<dbReference type="PANTHER" id="PTHR22835">
    <property type="entry name" value="ZINC FINGER FYVE DOMAIN CONTAINING PROTEIN"/>
    <property type="match status" value="1"/>
</dbReference>
<dbReference type="Pfam" id="PF00657">
    <property type="entry name" value="Lipase_GDSL"/>
    <property type="match status" value="1"/>
</dbReference>
<dbReference type="SUPFAM" id="SSF52266">
    <property type="entry name" value="SGNH hydrolase"/>
    <property type="match status" value="1"/>
</dbReference>
<proteinExistence type="evidence at protein level"/>
<name>FUCO3_ARATH</name>